<reference evidence="9" key="1">
    <citation type="journal article" date="1998" name="Science">
        <title>Genome sequence of the nematode C. elegans: a platform for investigating biology.</title>
        <authorList>
            <consortium name="The C. elegans sequencing consortium"/>
        </authorList>
    </citation>
    <scope>NUCLEOTIDE SEQUENCE [LARGE SCALE GENOMIC DNA]</scope>
    <source>
        <strain evidence="9">Bristol N2</strain>
    </source>
</reference>
<reference evidence="7" key="2">
    <citation type="journal article" date="2007" name="Biochem. Biophys. Res. Commun.">
        <title>Differential expression pattern of UBX family genes in Caenorhabditis elegans.</title>
        <authorList>
            <person name="Yamauchi S."/>
            <person name="Sasagawa Y."/>
            <person name="Ogura T."/>
            <person name="Yamanaka K."/>
        </authorList>
    </citation>
    <scope>TISSUE SPECIFICITY</scope>
    <scope>DEVELOPMENTAL STAGE</scope>
</reference>
<reference evidence="7" key="3">
    <citation type="journal article" date="2010" name="Genes Cells">
        <title>Caenorhabditis elegans UBX cofactors for CDC-48/p97 control spermatogenesis.</title>
        <authorList>
            <person name="Sasagawa Y."/>
            <person name="Yamanaka K."/>
            <person name="Saito-Sasagawa Y."/>
            <person name="Ogura T."/>
        </authorList>
    </citation>
    <scope>FUNCTION</scope>
    <scope>INTERACTION WITH CDC-48.1 AND CDC-48.2</scope>
    <scope>SUBCELLULAR LOCATION</scope>
    <scope>TISSUE SPECIFICITY</scope>
    <scope>DISRUPTION PHENOTYPE</scope>
</reference>
<reference evidence="7" key="4">
    <citation type="journal article" date="2013" name="J. Cell Biol.">
        <title>The UBXN-2/p37/p47 adaptors of CDC-48/p97 regulate mitosis by limiting the centrosomal recruitment of Aurora A.</title>
        <authorList>
            <person name="Kress E."/>
            <person name="Schwager F."/>
            <person name="Holtackers R."/>
            <person name="Seiler J."/>
            <person name="Prodon F."/>
            <person name="Zanin E."/>
            <person name="Eiteneuer A."/>
            <person name="Toya M."/>
            <person name="Sugimoto A."/>
            <person name="Meyer H."/>
            <person name="Meraldi P."/>
            <person name="Gotta M."/>
        </authorList>
    </citation>
    <scope>FUNCTION</scope>
    <scope>INTERACTION WITH CDC-48.1; CDC-48.2 AND AIR-1</scope>
    <scope>SUBCELLULAR LOCATION</scope>
    <scope>DISRUPTION PHENOTYPE</scope>
</reference>
<evidence type="ECO:0000255" key="1">
    <source>
        <dbReference type="PROSITE-ProRule" id="PRU00215"/>
    </source>
</evidence>
<evidence type="ECO:0000255" key="2">
    <source>
        <dbReference type="PROSITE-ProRule" id="PRU00732"/>
    </source>
</evidence>
<evidence type="ECO:0000256" key="3">
    <source>
        <dbReference type="SAM" id="MobiDB-lite"/>
    </source>
</evidence>
<evidence type="ECO:0000269" key="4">
    <source>
    </source>
</evidence>
<evidence type="ECO:0000269" key="5">
    <source>
    </source>
</evidence>
<evidence type="ECO:0000269" key="6">
    <source>
    </source>
</evidence>
<evidence type="ECO:0000305" key="7"/>
<evidence type="ECO:0000312" key="8">
    <source>
        <dbReference type="EMBL" id="CCD74209.1"/>
    </source>
</evidence>
<evidence type="ECO:0000312" key="9">
    <source>
        <dbReference type="Proteomes" id="UP000001940"/>
    </source>
</evidence>
<evidence type="ECO:0000312" key="10">
    <source>
        <dbReference type="WormBase" id="Y94H6A.9a"/>
    </source>
</evidence>
<evidence type="ECO:0000312" key="11">
    <source>
        <dbReference type="WormBase" id="Y94H6A.9b"/>
    </source>
</evidence>
<gene>
    <name evidence="10" type="primary">ubxn-2</name>
    <name evidence="8" type="ORF">Y94H6A.9</name>
</gene>
<proteinExistence type="evidence at protein level"/>
<accession>Q9N2W5</accession>
<accession>Q86DD7</accession>
<organism evidence="9">
    <name type="scientific">Caenorhabditis elegans</name>
    <dbReference type="NCBI Taxonomy" id="6239"/>
    <lineage>
        <taxon>Eukaryota</taxon>
        <taxon>Metazoa</taxon>
        <taxon>Ecdysozoa</taxon>
        <taxon>Nematoda</taxon>
        <taxon>Chromadorea</taxon>
        <taxon>Rhabditida</taxon>
        <taxon>Rhabditina</taxon>
        <taxon>Rhabditomorpha</taxon>
        <taxon>Rhabditoidea</taxon>
        <taxon>Rhabditidae</taxon>
        <taxon>Peloderinae</taxon>
        <taxon>Caenorhabditis</taxon>
    </lineage>
</organism>
<keyword id="KW-0025">Alternative splicing</keyword>
<keyword id="KW-0963">Cytoplasm</keyword>
<keyword id="KW-0206">Cytoskeleton</keyword>
<keyword id="KW-0221">Differentiation</keyword>
<keyword id="KW-0539">Nucleus</keyword>
<keyword id="KW-1185">Reference proteome</keyword>
<keyword id="KW-0744">Spermatogenesis</keyword>
<comment type="function">
    <text evidence="5 6">Ubiquitin-binding protein which acts as an adapter for ATPase cdc-48.1 and/or cdc-48.2, conferring substrate specificity (PubMed:20977550). Together with ubxn-2 and ubxn-3, plays a role in hermaphrodite spermatogenesis probably by promoting the degradation of sex determination terminal factor tra-1 (PubMed:20977550). Probably in association with ATPase cdc-48.1 or/and cdc-48.2, regulates the centrosomal levels of kinase air-1 levels during mitotic progression by promoting air-1 removal from centrosomes in prophase (PubMed:23649807). Also, regulates spindle orientation in the one-cell embryo by controlling centration and rotation of the pronuclei-centrosome complex in prophase (PubMed:23649807).</text>
</comment>
<comment type="subunit">
    <text evidence="5 6">Interacts with cdc-48.1 (via N-terminus) and cdc-48.2 (via N-terminus) (PubMed:20977550, PubMed:23649807). Interacts with kinase air-1 (PubMed:23649807).</text>
</comment>
<comment type="subcellular location">
    <subcellularLocation>
        <location evidence="5">Cytoplasm</location>
        <location evidence="5">Perinuclear region</location>
    </subcellularLocation>
    <subcellularLocation>
        <location evidence="6">Nucleus</location>
    </subcellularLocation>
    <subcellularLocation>
        <location evidence="6">Cytoplasm</location>
    </subcellularLocation>
    <subcellularLocation>
        <location evidence="6">Cytoplasm</location>
        <location evidence="6">Cytoskeleton</location>
        <location evidence="6">Microtubule organizing center</location>
        <location evidence="6">Centrosome</location>
    </subcellularLocation>
    <text evidence="5 6">Colocalizes with cdc-48.1 to the perinuclear region in spermatocytes (PubMed:20977550). Nuclear localization is cdc-48-dependent (PubMed:23649807). During embryonic mitotic metaphase, telophase and to a certain extent prophase, localizes to centrosomes (PubMed:23649807).</text>
</comment>
<comment type="alternative products">
    <event type="alternative splicing"/>
    <isoform>
        <id>Q9N2W5-1</id>
        <name evidence="10">a</name>
        <sequence type="displayed"/>
    </isoform>
    <isoform>
        <id>Q9N2W5-2</id>
        <name evidence="11">b</name>
        <sequence type="described" ref="VSP_059591"/>
    </isoform>
</comment>
<comment type="tissue specificity">
    <text evidence="4 5">Expressed in the germline (at protein level) (PubMed:20977550). Expressed in spermatocytes but not in mature sperm (at protein level) (PubMed:20977550). Ubiquitously expressed (PubMed:17498661). Predominantly expressed in the spermatheca (PubMed:17498661).</text>
</comment>
<comment type="developmental stage">
    <text evidence="4">Expressed in embryos, larvae and adults.</text>
</comment>
<comment type="disruption phenotype">
    <text evidence="5 6">RNAi-mediated knockdown does not cause any visible phenotype (PubMed:20977550). Causes 82 percent embryonic lethality (PubMed:23649807). One-cell embryos have defects in pronuclei positioning and spindle orientation during prophase; however the duration of cell division and establishment of embryo polarity are normal (PubMed:23649807). During prophase, increases active air-1 and to a lesser extent zyg-9, plk-1 and spd-2, accumulation at centrosomes, centrosome size and microtubule growth rate (PubMed:23649807). Simultaneous RNAi-mediated knockdown of air-1 restores normal pronuclei positioning and spindle orientation but not embryonic lethality (PubMed:23649807). Simultaneous RNAi-mediated knockdown of ubxn-1 and ubxn-3, causes 50 percent embryonic lethality (PubMed:20977550). The surviving hermaphrodite progeny are sterile due to a lack of sperm (PubMed:20977550). Abnormal accumulation of sex determination terminal factor tra-1 (PubMed:20977550). Germline development is normal (PubMed:20977550). In males, sperm production is normal (PubMed:20977550).</text>
</comment>
<comment type="similarity">
    <text evidence="7">Belongs to the NSFL1C family.</text>
</comment>
<feature type="chain" id="PRO_0000444374" description="UBX domain-containing protein 2">
    <location>
        <begin position="1"/>
        <end position="301"/>
    </location>
</feature>
<feature type="domain" description="SEP" evidence="2">
    <location>
        <begin position="89"/>
        <end position="153"/>
    </location>
</feature>
<feature type="domain" description="UBX" evidence="1">
    <location>
        <begin position="218"/>
        <end position="295"/>
    </location>
</feature>
<feature type="region of interest" description="Disordered" evidence="3">
    <location>
        <begin position="1"/>
        <end position="61"/>
    </location>
</feature>
<feature type="region of interest" description="Disordered" evidence="3">
    <location>
        <begin position="176"/>
        <end position="200"/>
    </location>
</feature>
<feature type="compositionally biased region" description="Low complexity" evidence="3">
    <location>
        <begin position="178"/>
        <end position="192"/>
    </location>
</feature>
<feature type="splice variant" id="VSP_059591" description="In isoform b." evidence="7">
    <location>
        <begin position="1"/>
        <end position="108"/>
    </location>
</feature>
<dbReference type="EMBL" id="BX284604">
    <property type="protein sequence ID" value="CCD74209.1"/>
    <property type="molecule type" value="Genomic_DNA"/>
</dbReference>
<dbReference type="EMBL" id="BX284604">
    <property type="protein sequence ID" value="CCD74210.1"/>
    <property type="molecule type" value="Genomic_DNA"/>
</dbReference>
<dbReference type="RefSeq" id="NP_001023590.1">
    <molecule id="Q9N2W5-1"/>
    <property type="nucleotide sequence ID" value="NM_001028419.5"/>
</dbReference>
<dbReference type="RefSeq" id="NP_001023591.1">
    <property type="nucleotide sequence ID" value="NM_001028420.3"/>
</dbReference>
<dbReference type="RefSeq" id="NP_001368066.1">
    <molecule id="Q9N2W5-2"/>
    <property type="nucleotide sequence ID" value="NM_001380105.1"/>
</dbReference>
<dbReference type="SMR" id="Q9N2W5"/>
<dbReference type="DIP" id="DIP-26140N"/>
<dbReference type="FunCoup" id="Q9N2W5">
    <property type="interactions" value="2724"/>
</dbReference>
<dbReference type="IntAct" id="Q9N2W5">
    <property type="interactions" value="2"/>
</dbReference>
<dbReference type="STRING" id="6239.Y94H6A.9a.1"/>
<dbReference type="PaxDb" id="6239-Y94H6A.9a"/>
<dbReference type="PeptideAtlas" id="Q9N2W5"/>
<dbReference type="EnsemblMetazoa" id="Y94H6A.9a.1">
    <molecule id="Q9N2W5-1"/>
    <property type="protein sequence ID" value="Y94H6A.9a.1"/>
    <property type="gene ID" value="WBGene00022381"/>
</dbReference>
<dbReference type="EnsemblMetazoa" id="Y94H6A.9b.1">
    <molecule id="Q9N2W5-2"/>
    <property type="protein sequence ID" value="Y94H6A.9b.1"/>
    <property type="gene ID" value="WBGene00022381"/>
</dbReference>
<dbReference type="GeneID" id="177057"/>
<dbReference type="KEGG" id="cel:CELE_Y94H6A.9"/>
<dbReference type="UCSC" id="Y94H6A.9b">
    <property type="organism name" value="c. elegans"/>
</dbReference>
<dbReference type="AGR" id="WB:WBGene00022381"/>
<dbReference type="CTD" id="177057"/>
<dbReference type="WormBase" id="Y94H6A.9a">
    <molecule id="Q9N2W5-1"/>
    <property type="protein sequence ID" value="CE27555"/>
    <property type="gene ID" value="WBGene00022381"/>
    <property type="gene designation" value="ubxn-2"/>
</dbReference>
<dbReference type="WormBase" id="Y94H6A.9b">
    <molecule id="Q9N2W5-2"/>
    <property type="protein sequence ID" value="CE33955"/>
    <property type="gene ID" value="WBGene00022381"/>
    <property type="gene designation" value="ubxn-2"/>
</dbReference>
<dbReference type="eggNOG" id="KOG2086">
    <property type="taxonomic scope" value="Eukaryota"/>
</dbReference>
<dbReference type="HOGENOM" id="CLU_029402_1_0_1"/>
<dbReference type="InParanoid" id="Q9N2W5"/>
<dbReference type="OMA" id="QEWYTGG"/>
<dbReference type="OrthoDB" id="274641at2759"/>
<dbReference type="PhylomeDB" id="Q9N2W5"/>
<dbReference type="Reactome" id="R-CEL-9013407">
    <property type="pathway name" value="RHOH GTPase cycle"/>
</dbReference>
<dbReference type="PRO" id="PR:Q9N2W5"/>
<dbReference type="Proteomes" id="UP000001940">
    <property type="component" value="Chromosome IV"/>
</dbReference>
<dbReference type="Bgee" id="WBGene00022381">
    <property type="expression patterns" value="Expressed in germ line (C elegans) and 4 other cell types or tissues"/>
</dbReference>
<dbReference type="ExpressionAtlas" id="Q9N2W5">
    <property type="expression patterns" value="baseline and differential"/>
</dbReference>
<dbReference type="GO" id="GO:0005737">
    <property type="term" value="C:cytoplasm"/>
    <property type="evidence" value="ECO:0000314"/>
    <property type="project" value="UniProtKB"/>
</dbReference>
<dbReference type="GO" id="GO:0005829">
    <property type="term" value="C:cytosol"/>
    <property type="evidence" value="ECO:0000318"/>
    <property type="project" value="GO_Central"/>
</dbReference>
<dbReference type="GO" id="GO:0005634">
    <property type="term" value="C:nucleus"/>
    <property type="evidence" value="ECO:0000314"/>
    <property type="project" value="UniProtKB"/>
</dbReference>
<dbReference type="GO" id="GO:0048471">
    <property type="term" value="C:perinuclear region of cytoplasm"/>
    <property type="evidence" value="ECO:0000314"/>
    <property type="project" value="WormBase"/>
</dbReference>
<dbReference type="GO" id="GO:0031616">
    <property type="term" value="C:spindle pole centrosome"/>
    <property type="evidence" value="ECO:0000314"/>
    <property type="project" value="UniProtKB"/>
</dbReference>
<dbReference type="GO" id="GO:0036435">
    <property type="term" value="F:K48-linked polyubiquitin modification-dependent protein binding"/>
    <property type="evidence" value="ECO:0000314"/>
    <property type="project" value="UniProtKB"/>
</dbReference>
<dbReference type="GO" id="GO:0019901">
    <property type="term" value="F:protein kinase binding"/>
    <property type="evidence" value="ECO:0000353"/>
    <property type="project" value="UniProtKB"/>
</dbReference>
<dbReference type="GO" id="GO:0043130">
    <property type="term" value="F:ubiquitin binding"/>
    <property type="evidence" value="ECO:0000318"/>
    <property type="project" value="GO_Central"/>
</dbReference>
<dbReference type="GO" id="GO:0000045">
    <property type="term" value="P:autophagosome assembly"/>
    <property type="evidence" value="ECO:0000318"/>
    <property type="project" value="GO_Central"/>
</dbReference>
<dbReference type="GO" id="GO:0030154">
    <property type="term" value="P:cell differentiation"/>
    <property type="evidence" value="ECO:0007669"/>
    <property type="project" value="UniProtKB-KW"/>
</dbReference>
<dbReference type="GO" id="GO:0000132">
    <property type="term" value="P:establishment of mitotic spindle orientation"/>
    <property type="evidence" value="ECO:0000315"/>
    <property type="project" value="UniProtKB"/>
</dbReference>
<dbReference type="GO" id="GO:0007030">
    <property type="term" value="P:Golgi organization"/>
    <property type="evidence" value="ECO:0000318"/>
    <property type="project" value="GO_Central"/>
</dbReference>
<dbReference type="GO" id="GO:0042006">
    <property type="term" value="P:masculinization of hermaphroditic germ-line"/>
    <property type="evidence" value="ECO:0000316"/>
    <property type="project" value="UniProtKB"/>
</dbReference>
<dbReference type="GO" id="GO:0061025">
    <property type="term" value="P:membrane fusion"/>
    <property type="evidence" value="ECO:0000318"/>
    <property type="project" value="GO_Central"/>
</dbReference>
<dbReference type="GO" id="GO:1904780">
    <property type="term" value="P:negative regulation of protein localization to centrosome"/>
    <property type="evidence" value="ECO:0000315"/>
    <property type="project" value="UniProtKB"/>
</dbReference>
<dbReference type="GO" id="GO:0031468">
    <property type="term" value="P:nuclear membrane reassembly"/>
    <property type="evidence" value="ECO:0000318"/>
    <property type="project" value="GO_Central"/>
</dbReference>
<dbReference type="GO" id="GO:0045732">
    <property type="term" value="P:positive regulation of protein catabolic process"/>
    <property type="evidence" value="ECO:0000316"/>
    <property type="project" value="UniProtKB"/>
</dbReference>
<dbReference type="GO" id="GO:0043161">
    <property type="term" value="P:proteasome-mediated ubiquitin-dependent protein catabolic process"/>
    <property type="evidence" value="ECO:0000318"/>
    <property type="project" value="GO_Central"/>
</dbReference>
<dbReference type="GO" id="GO:0007283">
    <property type="term" value="P:spermatogenesis"/>
    <property type="evidence" value="ECO:0000316"/>
    <property type="project" value="UniProtKB"/>
</dbReference>
<dbReference type="CDD" id="cd01770">
    <property type="entry name" value="UBX_UBXN2"/>
    <property type="match status" value="1"/>
</dbReference>
<dbReference type="Gene3D" id="3.10.20.90">
    <property type="entry name" value="Phosphatidylinositol 3-kinase Catalytic Subunit, Chain A, domain 1"/>
    <property type="match status" value="1"/>
</dbReference>
<dbReference type="Gene3D" id="3.30.420.210">
    <property type="entry name" value="SEP domain"/>
    <property type="match status" value="1"/>
</dbReference>
<dbReference type="InterPro" id="IPR036241">
    <property type="entry name" value="NSFL1C_SEP_dom_sf"/>
</dbReference>
<dbReference type="InterPro" id="IPR012989">
    <property type="entry name" value="SEP_domain"/>
</dbReference>
<dbReference type="InterPro" id="IPR029071">
    <property type="entry name" value="Ubiquitin-like_domsf"/>
</dbReference>
<dbReference type="InterPro" id="IPR001012">
    <property type="entry name" value="UBX_dom"/>
</dbReference>
<dbReference type="PANTHER" id="PTHR23333:SF20">
    <property type="entry name" value="NSFL1 COFACTOR P47"/>
    <property type="match status" value="1"/>
</dbReference>
<dbReference type="PANTHER" id="PTHR23333">
    <property type="entry name" value="UBX DOMAIN CONTAINING PROTEIN"/>
    <property type="match status" value="1"/>
</dbReference>
<dbReference type="Pfam" id="PF08059">
    <property type="entry name" value="SEP"/>
    <property type="match status" value="1"/>
</dbReference>
<dbReference type="Pfam" id="PF00789">
    <property type="entry name" value="UBX"/>
    <property type="match status" value="1"/>
</dbReference>
<dbReference type="SMART" id="SM00553">
    <property type="entry name" value="SEP"/>
    <property type="match status" value="1"/>
</dbReference>
<dbReference type="SMART" id="SM00166">
    <property type="entry name" value="UBX"/>
    <property type="match status" value="1"/>
</dbReference>
<dbReference type="SUPFAM" id="SSF102848">
    <property type="entry name" value="NSFL1 (p97 ATPase) cofactor p47, SEP domain"/>
    <property type="match status" value="1"/>
</dbReference>
<dbReference type="SUPFAM" id="SSF54236">
    <property type="entry name" value="Ubiquitin-like"/>
    <property type="match status" value="1"/>
</dbReference>
<dbReference type="PROSITE" id="PS51399">
    <property type="entry name" value="SEP"/>
    <property type="match status" value="1"/>
</dbReference>
<dbReference type="PROSITE" id="PS50033">
    <property type="entry name" value="UBX"/>
    <property type="match status" value="1"/>
</dbReference>
<protein>
    <recommendedName>
        <fullName evidence="7">UBX domain-containing protein 2</fullName>
    </recommendedName>
</protein>
<name>UBXN2_CAEEL</name>
<sequence length="301" mass="32550">MSRNIRTFRDIGNNDDGGPDSDDSGADAAERGAPQEFYAGSGQAVQGPRGAAARGPDSEAHIRRILQAAEVVQPEGGEAPRGRPSGRETISLTLHLWSDGLSIEDGPLMSRQDPRTIEFLESVGKGEIPPSLVQQYPGKEIDFKVNRHHEEYVAPKMKPFGGSGVRLGNVVPTVLGQSSSSATTAGTSSATTDHNPDHTAENEAKQLEDAKKELSTNMNEPTTNIQIRLPNNQRLVGIFNHSHTLEAVRTFICTARPDMIYAPFQMMAAYPPKPFEDESQTLKDANVLNSVVAVKILPTTN</sequence>